<reference key="1">
    <citation type="journal article" date="2015" name="Genome Announc.">
        <title>Complete genome sequence of Anaeromyxobacter sp. Fw109-5, an anaerobic, metal-reducing bacterium isolated from a contaminated subsurface environment.</title>
        <authorList>
            <person name="Hwang C."/>
            <person name="Copeland A."/>
            <person name="Lucas S."/>
            <person name="Lapidus A."/>
            <person name="Barry K."/>
            <person name="Glavina Del Rio T."/>
            <person name="Dalin E."/>
            <person name="Tice H."/>
            <person name="Pitluck S."/>
            <person name="Sims D."/>
            <person name="Brettin T."/>
            <person name="Bruce D.C."/>
            <person name="Detter J.C."/>
            <person name="Han C.S."/>
            <person name="Schmutz J."/>
            <person name="Larimer F.W."/>
            <person name="Land M.L."/>
            <person name="Hauser L.J."/>
            <person name="Kyrpides N."/>
            <person name="Lykidis A."/>
            <person name="Richardson P."/>
            <person name="Belieav A."/>
            <person name="Sanford R.A."/>
            <person name="Loeffler F.E."/>
            <person name="Fields M.W."/>
        </authorList>
    </citation>
    <scope>NUCLEOTIDE SEQUENCE [LARGE SCALE GENOMIC DNA]</scope>
    <source>
        <strain>Fw109-5</strain>
    </source>
</reference>
<protein>
    <recommendedName>
        <fullName evidence="1">Small ribosomal subunit protein uS17</fullName>
    </recommendedName>
    <alternativeName>
        <fullName evidence="2">30S ribosomal protein S17</fullName>
    </alternativeName>
</protein>
<sequence length="85" mass="9823">MERGNRKSRIGVVVSNKMAKTVVVKVERRVADPKYGKIVKRAEKYKAHDENNACQIGDKVRIVETRPMSKDKRWRIAETLEKAEV</sequence>
<gene>
    <name evidence="1" type="primary">rpsQ</name>
    <name type="ordered locus">Anae109_1920</name>
</gene>
<proteinExistence type="inferred from homology"/>
<comment type="function">
    <text evidence="1">One of the primary rRNA binding proteins, it binds specifically to the 5'-end of 16S ribosomal RNA.</text>
</comment>
<comment type="subunit">
    <text evidence="1">Part of the 30S ribosomal subunit.</text>
</comment>
<comment type="similarity">
    <text evidence="1">Belongs to the universal ribosomal protein uS17 family.</text>
</comment>
<dbReference type="EMBL" id="CP000769">
    <property type="protein sequence ID" value="ABS26123.1"/>
    <property type="molecule type" value="Genomic_DNA"/>
</dbReference>
<dbReference type="RefSeq" id="WP_012096702.1">
    <property type="nucleotide sequence ID" value="NC_009675.1"/>
</dbReference>
<dbReference type="SMR" id="A7HBM7"/>
<dbReference type="STRING" id="404589.Anae109_1920"/>
<dbReference type="KEGG" id="afw:Anae109_1920"/>
<dbReference type="eggNOG" id="COG0186">
    <property type="taxonomic scope" value="Bacteria"/>
</dbReference>
<dbReference type="HOGENOM" id="CLU_073626_1_0_7"/>
<dbReference type="OrthoDB" id="9811714at2"/>
<dbReference type="Proteomes" id="UP000006382">
    <property type="component" value="Chromosome"/>
</dbReference>
<dbReference type="GO" id="GO:0022627">
    <property type="term" value="C:cytosolic small ribosomal subunit"/>
    <property type="evidence" value="ECO:0007669"/>
    <property type="project" value="TreeGrafter"/>
</dbReference>
<dbReference type="GO" id="GO:0019843">
    <property type="term" value="F:rRNA binding"/>
    <property type="evidence" value="ECO:0007669"/>
    <property type="project" value="UniProtKB-UniRule"/>
</dbReference>
<dbReference type="GO" id="GO:0003735">
    <property type="term" value="F:structural constituent of ribosome"/>
    <property type="evidence" value="ECO:0007669"/>
    <property type="project" value="InterPro"/>
</dbReference>
<dbReference type="GO" id="GO:0006412">
    <property type="term" value="P:translation"/>
    <property type="evidence" value="ECO:0007669"/>
    <property type="project" value="UniProtKB-UniRule"/>
</dbReference>
<dbReference type="CDD" id="cd00364">
    <property type="entry name" value="Ribosomal_uS17"/>
    <property type="match status" value="1"/>
</dbReference>
<dbReference type="Gene3D" id="2.40.50.140">
    <property type="entry name" value="Nucleic acid-binding proteins"/>
    <property type="match status" value="1"/>
</dbReference>
<dbReference type="HAMAP" id="MF_01345_B">
    <property type="entry name" value="Ribosomal_uS17_B"/>
    <property type="match status" value="1"/>
</dbReference>
<dbReference type="InterPro" id="IPR012340">
    <property type="entry name" value="NA-bd_OB-fold"/>
</dbReference>
<dbReference type="InterPro" id="IPR000266">
    <property type="entry name" value="Ribosomal_uS17"/>
</dbReference>
<dbReference type="InterPro" id="IPR019984">
    <property type="entry name" value="Ribosomal_uS17_bact/chlr"/>
</dbReference>
<dbReference type="NCBIfam" id="NF004123">
    <property type="entry name" value="PRK05610.1"/>
    <property type="match status" value="1"/>
</dbReference>
<dbReference type="NCBIfam" id="TIGR03635">
    <property type="entry name" value="uS17_bact"/>
    <property type="match status" value="1"/>
</dbReference>
<dbReference type="PANTHER" id="PTHR10744">
    <property type="entry name" value="40S RIBOSOMAL PROTEIN S11 FAMILY MEMBER"/>
    <property type="match status" value="1"/>
</dbReference>
<dbReference type="PANTHER" id="PTHR10744:SF1">
    <property type="entry name" value="SMALL RIBOSOMAL SUBUNIT PROTEIN US17M"/>
    <property type="match status" value="1"/>
</dbReference>
<dbReference type="Pfam" id="PF00366">
    <property type="entry name" value="Ribosomal_S17"/>
    <property type="match status" value="1"/>
</dbReference>
<dbReference type="PRINTS" id="PR00973">
    <property type="entry name" value="RIBOSOMALS17"/>
</dbReference>
<dbReference type="SUPFAM" id="SSF50249">
    <property type="entry name" value="Nucleic acid-binding proteins"/>
    <property type="match status" value="1"/>
</dbReference>
<accession>A7HBM7</accession>
<feature type="chain" id="PRO_1000054913" description="Small ribosomal subunit protein uS17">
    <location>
        <begin position="1"/>
        <end position="85"/>
    </location>
</feature>
<name>RS17_ANADF</name>
<keyword id="KW-1185">Reference proteome</keyword>
<keyword id="KW-0687">Ribonucleoprotein</keyword>
<keyword id="KW-0689">Ribosomal protein</keyword>
<keyword id="KW-0694">RNA-binding</keyword>
<keyword id="KW-0699">rRNA-binding</keyword>
<organism>
    <name type="scientific">Anaeromyxobacter sp. (strain Fw109-5)</name>
    <dbReference type="NCBI Taxonomy" id="404589"/>
    <lineage>
        <taxon>Bacteria</taxon>
        <taxon>Pseudomonadati</taxon>
        <taxon>Myxococcota</taxon>
        <taxon>Myxococcia</taxon>
        <taxon>Myxococcales</taxon>
        <taxon>Cystobacterineae</taxon>
        <taxon>Anaeromyxobacteraceae</taxon>
        <taxon>Anaeromyxobacter</taxon>
    </lineage>
</organism>
<evidence type="ECO:0000255" key="1">
    <source>
        <dbReference type="HAMAP-Rule" id="MF_01345"/>
    </source>
</evidence>
<evidence type="ECO:0000305" key="2"/>